<keyword id="KW-0030">Aminoacyl-tRNA synthetase</keyword>
<keyword id="KW-0067">ATP-binding</keyword>
<keyword id="KW-0963">Cytoplasm</keyword>
<keyword id="KW-0436">Ligase</keyword>
<keyword id="KW-0547">Nucleotide-binding</keyword>
<keyword id="KW-0648">Protein biosynthesis</keyword>
<keyword id="KW-0694">RNA-binding</keyword>
<name>SYY_LACH4</name>
<reference key="1">
    <citation type="journal article" date="2008" name="J. Bacteriol.">
        <title>Genome sequence of Lactobacillus helveticus: an organism distinguished by selective gene loss and IS element expansion.</title>
        <authorList>
            <person name="Callanan M."/>
            <person name="Kaleta P."/>
            <person name="O'Callaghan J."/>
            <person name="O'Sullivan O."/>
            <person name="Jordan K."/>
            <person name="McAuliffe O."/>
            <person name="Sangrador-Vegas A."/>
            <person name="Slattery L."/>
            <person name="Fitzgerald G.F."/>
            <person name="Beresford T."/>
            <person name="Ross R.P."/>
        </authorList>
    </citation>
    <scope>NUCLEOTIDE SEQUENCE [LARGE SCALE GENOMIC DNA]</scope>
    <source>
        <strain>DPC 4571</strain>
    </source>
</reference>
<dbReference type="EC" id="6.1.1.1" evidence="1"/>
<dbReference type="EMBL" id="CP000517">
    <property type="protein sequence ID" value="ABX26453.1"/>
    <property type="molecule type" value="Genomic_DNA"/>
</dbReference>
<dbReference type="RefSeq" id="WP_012211314.1">
    <property type="nucleotide sequence ID" value="NC_010080.1"/>
</dbReference>
<dbReference type="SMR" id="A8YX30"/>
<dbReference type="KEGG" id="lhe:lhv_0208"/>
<dbReference type="eggNOG" id="COG0162">
    <property type="taxonomic scope" value="Bacteria"/>
</dbReference>
<dbReference type="HOGENOM" id="CLU_024003_0_3_9"/>
<dbReference type="Proteomes" id="UP000000790">
    <property type="component" value="Chromosome"/>
</dbReference>
<dbReference type="GO" id="GO:0005829">
    <property type="term" value="C:cytosol"/>
    <property type="evidence" value="ECO:0007669"/>
    <property type="project" value="TreeGrafter"/>
</dbReference>
<dbReference type="GO" id="GO:0005524">
    <property type="term" value="F:ATP binding"/>
    <property type="evidence" value="ECO:0007669"/>
    <property type="project" value="UniProtKB-UniRule"/>
</dbReference>
<dbReference type="GO" id="GO:0003723">
    <property type="term" value="F:RNA binding"/>
    <property type="evidence" value="ECO:0007669"/>
    <property type="project" value="UniProtKB-KW"/>
</dbReference>
<dbReference type="GO" id="GO:0004831">
    <property type="term" value="F:tyrosine-tRNA ligase activity"/>
    <property type="evidence" value="ECO:0007669"/>
    <property type="project" value="UniProtKB-UniRule"/>
</dbReference>
<dbReference type="GO" id="GO:0006437">
    <property type="term" value="P:tyrosyl-tRNA aminoacylation"/>
    <property type="evidence" value="ECO:0007669"/>
    <property type="project" value="UniProtKB-UniRule"/>
</dbReference>
<dbReference type="CDD" id="cd00165">
    <property type="entry name" value="S4"/>
    <property type="match status" value="1"/>
</dbReference>
<dbReference type="CDD" id="cd00805">
    <property type="entry name" value="TyrRS_core"/>
    <property type="match status" value="1"/>
</dbReference>
<dbReference type="FunFam" id="1.10.240.10:FF:000001">
    <property type="entry name" value="Tyrosine--tRNA ligase"/>
    <property type="match status" value="1"/>
</dbReference>
<dbReference type="Gene3D" id="3.40.50.620">
    <property type="entry name" value="HUPs"/>
    <property type="match status" value="1"/>
</dbReference>
<dbReference type="Gene3D" id="3.10.290.10">
    <property type="entry name" value="RNA-binding S4 domain"/>
    <property type="match status" value="1"/>
</dbReference>
<dbReference type="Gene3D" id="1.10.240.10">
    <property type="entry name" value="Tyrosyl-Transfer RNA Synthetase"/>
    <property type="match status" value="1"/>
</dbReference>
<dbReference type="HAMAP" id="MF_02006">
    <property type="entry name" value="Tyr_tRNA_synth_type1"/>
    <property type="match status" value="1"/>
</dbReference>
<dbReference type="InterPro" id="IPR001412">
    <property type="entry name" value="aa-tRNA-synth_I_CS"/>
</dbReference>
<dbReference type="InterPro" id="IPR002305">
    <property type="entry name" value="aa-tRNA-synth_Ic"/>
</dbReference>
<dbReference type="InterPro" id="IPR014729">
    <property type="entry name" value="Rossmann-like_a/b/a_fold"/>
</dbReference>
<dbReference type="InterPro" id="IPR036986">
    <property type="entry name" value="S4_RNA-bd_sf"/>
</dbReference>
<dbReference type="InterPro" id="IPR054608">
    <property type="entry name" value="SYY-like_C"/>
</dbReference>
<dbReference type="InterPro" id="IPR002307">
    <property type="entry name" value="Tyr-tRNA-ligase"/>
</dbReference>
<dbReference type="InterPro" id="IPR024088">
    <property type="entry name" value="Tyr-tRNA-ligase_bac-type"/>
</dbReference>
<dbReference type="InterPro" id="IPR024107">
    <property type="entry name" value="Tyr-tRNA-ligase_bac_1"/>
</dbReference>
<dbReference type="NCBIfam" id="TIGR00234">
    <property type="entry name" value="tyrS"/>
    <property type="match status" value="1"/>
</dbReference>
<dbReference type="PANTHER" id="PTHR11766:SF0">
    <property type="entry name" value="TYROSINE--TRNA LIGASE, MITOCHONDRIAL"/>
    <property type="match status" value="1"/>
</dbReference>
<dbReference type="PANTHER" id="PTHR11766">
    <property type="entry name" value="TYROSYL-TRNA SYNTHETASE"/>
    <property type="match status" value="1"/>
</dbReference>
<dbReference type="Pfam" id="PF22421">
    <property type="entry name" value="SYY_C-terminal"/>
    <property type="match status" value="1"/>
</dbReference>
<dbReference type="Pfam" id="PF00579">
    <property type="entry name" value="tRNA-synt_1b"/>
    <property type="match status" value="1"/>
</dbReference>
<dbReference type="PRINTS" id="PR01040">
    <property type="entry name" value="TRNASYNTHTYR"/>
</dbReference>
<dbReference type="SUPFAM" id="SSF55174">
    <property type="entry name" value="Alpha-L RNA-binding motif"/>
    <property type="match status" value="1"/>
</dbReference>
<dbReference type="SUPFAM" id="SSF52374">
    <property type="entry name" value="Nucleotidylyl transferase"/>
    <property type="match status" value="1"/>
</dbReference>
<dbReference type="PROSITE" id="PS00178">
    <property type="entry name" value="AA_TRNA_LIGASE_I"/>
    <property type="match status" value="1"/>
</dbReference>
<dbReference type="PROSITE" id="PS50889">
    <property type="entry name" value="S4"/>
    <property type="match status" value="1"/>
</dbReference>
<proteinExistence type="inferred from homology"/>
<gene>
    <name evidence="1" type="primary">tyrS</name>
    <name type="ordered locus">lhv_0208</name>
</gene>
<sequence>MAKFDILEDLKWRGAINQETDEEGLRKYLAEHDDLALYCGTDPTGDSLHIGHLIPFMILKRFQMAGYHPVILIGGGTGAIGDPSGRKTERTLQTADQVKHNEECLTNQMKKLFGTENFEIRNNAEWLGKLNLIDFLRDYGKFFQVNNMINKEVVASRLENGISFTEFTYQILQAIDFYHLNKDDGVQLQIGGSDQWGNITAGIDLIHKLEGADRPAFGLTIPLMLKADGTKFGKSAGGAVWLDPEKTSPYEFYQFWINQDDRDVVKYLKYFAFLSREEIEDLAEKTEKEPWKRAAQKRLAEEVTKFVHGEAGLKEAQMITDALFSGNIKNLSVTQIEQGLKNAPSAEAGSEKKNLVDFLVDTKIEPSKRQAREDIKNGAIYVNGDREQSVDFDVDPSSAFDGKYVIIRKGKRKYTLVTIK</sequence>
<organism>
    <name type="scientific">Lactobacillus helveticus (strain DPC 4571)</name>
    <dbReference type="NCBI Taxonomy" id="405566"/>
    <lineage>
        <taxon>Bacteria</taxon>
        <taxon>Bacillati</taxon>
        <taxon>Bacillota</taxon>
        <taxon>Bacilli</taxon>
        <taxon>Lactobacillales</taxon>
        <taxon>Lactobacillaceae</taxon>
        <taxon>Lactobacillus</taxon>
    </lineage>
</organism>
<evidence type="ECO:0000255" key="1">
    <source>
        <dbReference type="HAMAP-Rule" id="MF_02006"/>
    </source>
</evidence>
<feature type="chain" id="PRO_1000088597" description="Tyrosine--tRNA ligase">
    <location>
        <begin position="1"/>
        <end position="420"/>
    </location>
</feature>
<feature type="domain" description="S4 RNA-binding" evidence="1">
    <location>
        <begin position="353"/>
        <end position="419"/>
    </location>
</feature>
<feature type="short sequence motif" description="'HIGH' region">
    <location>
        <begin position="43"/>
        <end position="52"/>
    </location>
</feature>
<feature type="short sequence motif" description="'KMSKS' region">
    <location>
        <begin position="231"/>
        <end position="235"/>
    </location>
</feature>
<feature type="binding site" evidence="1">
    <location>
        <position position="38"/>
    </location>
    <ligand>
        <name>L-tyrosine</name>
        <dbReference type="ChEBI" id="CHEBI:58315"/>
    </ligand>
</feature>
<feature type="binding site" evidence="1">
    <location>
        <position position="169"/>
    </location>
    <ligand>
        <name>L-tyrosine</name>
        <dbReference type="ChEBI" id="CHEBI:58315"/>
    </ligand>
</feature>
<feature type="binding site" evidence="1">
    <location>
        <position position="173"/>
    </location>
    <ligand>
        <name>L-tyrosine</name>
        <dbReference type="ChEBI" id="CHEBI:58315"/>
    </ligand>
</feature>
<feature type="binding site" evidence="1">
    <location>
        <position position="234"/>
    </location>
    <ligand>
        <name>ATP</name>
        <dbReference type="ChEBI" id="CHEBI:30616"/>
    </ligand>
</feature>
<accession>A8YX30</accession>
<protein>
    <recommendedName>
        <fullName evidence="1">Tyrosine--tRNA ligase</fullName>
        <ecNumber evidence="1">6.1.1.1</ecNumber>
    </recommendedName>
    <alternativeName>
        <fullName evidence="1">Tyrosyl-tRNA synthetase</fullName>
        <shortName evidence="1">TyrRS</shortName>
    </alternativeName>
</protein>
<comment type="function">
    <text evidence="1">Catalyzes the attachment of tyrosine to tRNA(Tyr) in a two-step reaction: tyrosine is first activated by ATP to form Tyr-AMP and then transferred to the acceptor end of tRNA(Tyr).</text>
</comment>
<comment type="catalytic activity">
    <reaction evidence="1">
        <text>tRNA(Tyr) + L-tyrosine + ATP = L-tyrosyl-tRNA(Tyr) + AMP + diphosphate + H(+)</text>
        <dbReference type="Rhea" id="RHEA:10220"/>
        <dbReference type="Rhea" id="RHEA-COMP:9706"/>
        <dbReference type="Rhea" id="RHEA-COMP:9707"/>
        <dbReference type="ChEBI" id="CHEBI:15378"/>
        <dbReference type="ChEBI" id="CHEBI:30616"/>
        <dbReference type="ChEBI" id="CHEBI:33019"/>
        <dbReference type="ChEBI" id="CHEBI:58315"/>
        <dbReference type="ChEBI" id="CHEBI:78442"/>
        <dbReference type="ChEBI" id="CHEBI:78536"/>
        <dbReference type="ChEBI" id="CHEBI:456215"/>
        <dbReference type="EC" id="6.1.1.1"/>
    </reaction>
</comment>
<comment type="subunit">
    <text evidence="1">Homodimer.</text>
</comment>
<comment type="subcellular location">
    <subcellularLocation>
        <location evidence="1">Cytoplasm</location>
    </subcellularLocation>
</comment>
<comment type="similarity">
    <text evidence="1">Belongs to the class-I aminoacyl-tRNA synthetase family. TyrS type 1 subfamily.</text>
</comment>